<name>RRAA_ECOLC</name>
<gene>
    <name evidence="1" type="primary">rraA</name>
    <name type="ordered locus">EcolC_4089</name>
</gene>
<sequence>MKYDTSELCDIYQEDVNVVEPLFSNFGGRASFGGQIITVKCFEDNGLLYDLLEQNGRGRVLVVDGGGSVRRALVDAELARLAVQNEWEGLVIYGAVRQVDDLEELDIGIQAMAAIPVGAAGEGIGESDVRVNFGGVTFFSGDHLYADNTGIILSEDPLDIE</sequence>
<evidence type="ECO:0000255" key="1">
    <source>
        <dbReference type="HAMAP-Rule" id="MF_00471"/>
    </source>
</evidence>
<accession>B1IVF0</accession>
<reference key="1">
    <citation type="submission" date="2008-02" db="EMBL/GenBank/DDBJ databases">
        <title>Complete sequence of Escherichia coli C str. ATCC 8739.</title>
        <authorList>
            <person name="Copeland A."/>
            <person name="Lucas S."/>
            <person name="Lapidus A."/>
            <person name="Glavina del Rio T."/>
            <person name="Dalin E."/>
            <person name="Tice H."/>
            <person name="Bruce D."/>
            <person name="Goodwin L."/>
            <person name="Pitluck S."/>
            <person name="Kiss H."/>
            <person name="Brettin T."/>
            <person name="Detter J.C."/>
            <person name="Han C."/>
            <person name="Kuske C.R."/>
            <person name="Schmutz J."/>
            <person name="Larimer F."/>
            <person name="Land M."/>
            <person name="Hauser L."/>
            <person name="Kyrpides N."/>
            <person name="Mikhailova N."/>
            <person name="Ingram L."/>
            <person name="Richardson P."/>
        </authorList>
    </citation>
    <scope>NUCLEOTIDE SEQUENCE [LARGE SCALE GENOMIC DNA]</scope>
    <source>
        <strain>ATCC 8739 / DSM 1576 / NBRC 3972 / NCIMB 8545 / WDCM 00012 / Crooks</strain>
    </source>
</reference>
<feature type="chain" id="PRO_1000081206" description="Regulator of ribonuclease activity A">
    <location>
        <begin position="1"/>
        <end position="161"/>
    </location>
</feature>
<organism>
    <name type="scientific">Escherichia coli (strain ATCC 8739 / DSM 1576 / NBRC 3972 / NCIMB 8545 / WDCM 00012 / Crooks)</name>
    <dbReference type="NCBI Taxonomy" id="481805"/>
    <lineage>
        <taxon>Bacteria</taxon>
        <taxon>Pseudomonadati</taxon>
        <taxon>Pseudomonadota</taxon>
        <taxon>Gammaproteobacteria</taxon>
        <taxon>Enterobacterales</taxon>
        <taxon>Enterobacteriaceae</taxon>
        <taxon>Escherichia</taxon>
    </lineage>
</organism>
<protein>
    <recommendedName>
        <fullName evidence="1">Regulator of ribonuclease activity A</fullName>
    </recommendedName>
</protein>
<dbReference type="EMBL" id="CP000946">
    <property type="protein sequence ID" value="ACA79687.1"/>
    <property type="molecule type" value="Genomic_DNA"/>
</dbReference>
<dbReference type="RefSeq" id="WP_000872908.1">
    <property type="nucleotide sequence ID" value="NZ_MTFT01000008.1"/>
</dbReference>
<dbReference type="SMR" id="B1IVF0"/>
<dbReference type="GeneID" id="93777969"/>
<dbReference type="KEGG" id="ecl:EcolC_4089"/>
<dbReference type="HOGENOM" id="CLU_072626_4_0_6"/>
<dbReference type="GO" id="GO:0005829">
    <property type="term" value="C:cytosol"/>
    <property type="evidence" value="ECO:0007669"/>
    <property type="project" value="TreeGrafter"/>
</dbReference>
<dbReference type="GO" id="GO:0060698">
    <property type="term" value="F:endoribonuclease inhibitor activity"/>
    <property type="evidence" value="ECO:0007669"/>
    <property type="project" value="UniProtKB-UniRule"/>
</dbReference>
<dbReference type="GO" id="GO:0019899">
    <property type="term" value="F:enzyme binding"/>
    <property type="evidence" value="ECO:0007669"/>
    <property type="project" value="UniProtKB-UniRule"/>
</dbReference>
<dbReference type="GO" id="GO:1902369">
    <property type="term" value="P:negative regulation of RNA catabolic process"/>
    <property type="evidence" value="ECO:0007669"/>
    <property type="project" value="TreeGrafter"/>
</dbReference>
<dbReference type="CDD" id="cd16841">
    <property type="entry name" value="RraA_family"/>
    <property type="match status" value="1"/>
</dbReference>
<dbReference type="FunFam" id="3.50.30.40:FF:000001">
    <property type="entry name" value="Regulator of ribonuclease activity A"/>
    <property type="match status" value="1"/>
</dbReference>
<dbReference type="Gene3D" id="3.50.30.40">
    <property type="entry name" value="Ribonuclease E inhibitor RraA/RraA-like"/>
    <property type="match status" value="1"/>
</dbReference>
<dbReference type="HAMAP" id="MF_00471">
    <property type="entry name" value="RraA"/>
    <property type="match status" value="1"/>
</dbReference>
<dbReference type="InterPro" id="IPR010203">
    <property type="entry name" value="RraA"/>
</dbReference>
<dbReference type="InterPro" id="IPR005493">
    <property type="entry name" value="RraA/RraA-like"/>
</dbReference>
<dbReference type="InterPro" id="IPR036704">
    <property type="entry name" value="RraA/RraA-like_sf"/>
</dbReference>
<dbReference type="InterPro" id="IPR014339">
    <property type="entry name" value="RraA_gpbac"/>
</dbReference>
<dbReference type="NCBIfam" id="TIGR01935">
    <property type="entry name" value="NOT-MenG"/>
    <property type="match status" value="1"/>
</dbReference>
<dbReference type="NCBIfam" id="NF006875">
    <property type="entry name" value="PRK09372.1"/>
    <property type="match status" value="1"/>
</dbReference>
<dbReference type="NCBIfam" id="TIGR02998">
    <property type="entry name" value="RraA_entero"/>
    <property type="match status" value="1"/>
</dbReference>
<dbReference type="PANTHER" id="PTHR33254">
    <property type="entry name" value="4-HYDROXY-4-METHYL-2-OXOGLUTARATE ALDOLASE 3-RELATED"/>
    <property type="match status" value="1"/>
</dbReference>
<dbReference type="PANTHER" id="PTHR33254:SF29">
    <property type="entry name" value="REGULATOR OF RIBONUCLEASE ACTIVITY A"/>
    <property type="match status" value="1"/>
</dbReference>
<dbReference type="Pfam" id="PF03737">
    <property type="entry name" value="RraA-like"/>
    <property type="match status" value="1"/>
</dbReference>
<dbReference type="SUPFAM" id="SSF89562">
    <property type="entry name" value="RraA-like"/>
    <property type="match status" value="1"/>
</dbReference>
<proteinExistence type="inferred from homology"/>
<keyword id="KW-0963">Cytoplasm</keyword>
<comment type="function">
    <text evidence="1">Globally modulates RNA abundance by binding to RNase E (Rne) and regulating its endonucleolytic activity. Can modulate Rne action in a substrate-dependent manner by altering the composition of the degradosome. Modulates RNA-binding and helicase activities of the degradosome.</text>
</comment>
<comment type="subunit">
    <text evidence="1">Homotrimer. Binds to both RNA-binding sites in the C-terminal region of Rne and to RhlB.</text>
</comment>
<comment type="subcellular location">
    <subcellularLocation>
        <location evidence="1">Cytoplasm</location>
    </subcellularLocation>
</comment>
<comment type="similarity">
    <text evidence="1">Belongs to the RraA family.</text>
</comment>